<feature type="chain" id="PRO_0000273621" description="S-adenosylmethionine decarboxylase beta chain" evidence="1">
    <location>
        <begin position="1"/>
        <end position="112"/>
    </location>
</feature>
<feature type="chain" id="PRO_0000273622" description="S-adenosylmethionine decarboxylase alpha chain" evidence="1">
    <location>
        <begin position="113"/>
        <end position="264"/>
    </location>
</feature>
<feature type="active site" description="Schiff-base intermediate with substrate; via pyruvic acid" evidence="1">
    <location>
        <position position="113"/>
    </location>
</feature>
<feature type="active site" description="Proton acceptor; for processing activity" evidence="1">
    <location>
        <position position="118"/>
    </location>
</feature>
<feature type="active site" description="Proton donor; for catalytic activity" evidence="1">
    <location>
        <position position="141"/>
    </location>
</feature>
<feature type="site" description="Cleavage (non-hydrolytic); by autolysis" evidence="1">
    <location>
        <begin position="112"/>
        <end position="113"/>
    </location>
</feature>
<feature type="modified residue" description="Pyruvic acid (Ser); by autocatalysis" evidence="1">
    <location>
        <position position="113"/>
    </location>
</feature>
<dbReference type="EC" id="4.1.1.50" evidence="1"/>
<dbReference type="EMBL" id="AP008229">
    <property type="protein sequence ID" value="BAE70687.1"/>
    <property type="molecule type" value="Genomic_DNA"/>
</dbReference>
<dbReference type="RefSeq" id="WP_011260494.1">
    <property type="nucleotide sequence ID" value="NC_007705.1"/>
</dbReference>
<dbReference type="SMR" id="Q2NYE0"/>
<dbReference type="GeneID" id="77335852"/>
<dbReference type="KEGG" id="xom:XOO3932"/>
<dbReference type="HOGENOM" id="CLU_092007_0_0_6"/>
<dbReference type="UniPathway" id="UPA00331">
    <property type="reaction ID" value="UER00451"/>
</dbReference>
<dbReference type="GO" id="GO:0005829">
    <property type="term" value="C:cytosol"/>
    <property type="evidence" value="ECO:0007669"/>
    <property type="project" value="TreeGrafter"/>
</dbReference>
<dbReference type="GO" id="GO:0004014">
    <property type="term" value="F:adenosylmethionine decarboxylase activity"/>
    <property type="evidence" value="ECO:0007669"/>
    <property type="project" value="UniProtKB-UniRule"/>
</dbReference>
<dbReference type="GO" id="GO:0008295">
    <property type="term" value="P:spermidine biosynthetic process"/>
    <property type="evidence" value="ECO:0007669"/>
    <property type="project" value="UniProtKB-UniRule"/>
</dbReference>
<dbReference type="FunFam" id="3.60.90.10:FF:000001">
    <property type="entry name" value="S-adenosylmethionine decarboxylase proenzyme"/>
    <property type="match status" value="1"/>
</dbReference>
<dbReference type="Gene3D" id="3.60.90.10">
    <property type="entry name" value="S-adenosylmethionine decarboxylase"/>
    <property type="match status" value="1"/>
</dbReference>
<dbReference type="HAMAP" id="MF_00465">
    <property type="entry name" value="AdoMetDC_2"/>
    <property type="match status" value="1"/>
</dbReference>
<dbReference type="InterPro" id="IPR003826">
    <property type="entry name" value="AdoMetDC_fam_prok"/>
</dbReference>
<dbReference type="InterPro" id="IPR009165">
    <property type="entry name" value="S-AdoMet_deCO2ase_bac"/>
</dbReference>
<dbReference type="InterPro" id="IPR016067">
    <property type="entry name" value="S-AdoMet_deCO2ase_core"/>
</dbReference>
<dbReference type="NCBIfam" id="TIGR03331">
    <property type="entry name" value="SAM_DCase_Eco"/>
    <property type="match status" value="1"/>
</dbReference>
<dbReference type="PANTHER" id="PTHR33866">
    <property type="entry name" value="S-ADENOSYLMETHIONINE DECARBOXYLASE PROENZYME"/>
    <property type="match status" value="1"/>
</dbReference>
<dbReference type="PANTHER" id="PTHR33866:SF1">
    <property type="entry name" value="S-ADENOSYLMETHIONINE DECARBOXYLASE PROENZYME"/>
    <property type="match status" value="1"/>
</dbReference>
<dbReference type="Pfam" id="PF02675">
    <property type="entry name" value="AdoMet_dc"/>
    <property type="match status" value="1"/>
</dbReference>
<dbReference type="PIRSF" id="PIRSF001356">
    <property type="entry name" value="SAM_decarboxylas"/>
    <property type="match status" value="1"/>
</dbReference>
<dbReference type="SUPFAM" id="SSF56276">
    <property type="entry name" value="S-adenosylmethionine decarboxylase"/>
    <property type="match status" value="1"/>
</dbReference>
<accession>Q2NYE0</accession>
<reference key="1">
    <citation type="journal article" date="2005" name="Jpn. Agric. Res. Q.">
        <title>Genome sequence of Xanthomonas oryzae pv. oryzae suggests contribution of large numbers of effector genes and insertion sequences to its race diversity.</title>
        <authorList>
            <person name="Ochiai H."/>
            <person name="Inoue Y."/>
            <person name="Takeya M."/>
            <person name="Sasaki A."/>
            <person name="Kaku H."/>
        </authorList>
    </citation>
    <scope>NUCLEOTIDE SEQUENCE [LARGE SCALE GENOMIC DNA]</scope>
    <source>
        <strain>MAFF 311018</strain>
    </source>
</reference>
<gene>
    <name evidence="1" type="primary">speD</name>
    <name type="ordered locus">XOO3932</name>
</gene>
<sequence>MVKPLPRLRLQGFNNLTKALSFNIYDVCYARTEEERQRYIEYIDEQYDADRLTQILTDVAEIIGANILNIARQDYDPQGASVTILISEEPVIDKKQAGRELISDAVVAHMDKSHITVHTYPETHPQEGIATFRADIDVATCGVISPLKALNYLIETLESDIVIMDYRVRGFTRDVKGKKHYIDHKINSIQHFLAKNVKSRYEMIDVNVYQENIFHTKMHLKDFDLDQYLFEERAKNLSFKERMKIETLLKREIEELFHGRNLSE</sequence>
<proteinExistence type="inferred from homology"/>
<evidence type="ECO:0000255" key="1">
    <source>
        <dbReference type="HAMAP-Rule" id="MF_00465"/>
    </source>
</evidence>
<name>SPED_XANOM</name>
<comment type="function">
    <text evidence="1">Catalyzes the decarboxylation of S-adenosylmethionine to S-adenosylmethioninamine (dcAdoMet), the propylamine donor required for the synthesis of the polyamines spermine and spermidine from the diamine putrescine.</text>
</comment>
<comment type="catalytic activity">
    <reaction evidence="1">
        <text>S-adenosyl-L-methionine + H(+) = S-adenosyl 3-(methylsulfanyl)propylamine + CO2</text>
        <dbReference type="Rhea" id="RHEA:15981"/>
        <dbReference type="ChEBI" id="CHEBI:15378"/>
        <dbReference type="ChEBI" id="CHEBI:16526"/>
        <dbReference type="ChEBI" id="CHEBI:57443"/>
        <dbReference type="ChEBI" id="CHEBI:59789"/>
        <dbReference type="EC" id="4.1.1.50"/>
    </reaction>
</comment>
<comment type="cofactor">
    <cofactor evidence="1">
        <name>pyruvate</name>
        <dbReference type="ChEBI" id="CHEBI:15361"/>
    </cofactor>
    <text evidence="1">Binds 1 pyruvoyl group covalently per subunit.</text>
</comment>
<comment type="pathway">
    <text evidence="1">Amine and polyamine biosynthesis; S-adenosylmethioninamine biosynthesis; S-adenosylmethioninamine from S-adenosyl-L-methionine: step 1/1.</text>
</comment>
<comment type="subunit">
    <text evidence="1">Heterooctamer of four alpha and four beta chains arranged as a tetramer of alpha/beta heterodimers.</text>
</comment>
<comment type="PTM">
    <text evidence="1">Is synthesized initially as an inactive proenzyme. Formation of the active enzyme involves a self-maturation process in which the active site pyruvoyl group is generated from an internal serine residue via an autocatalytic post-translational modification. Two non-identical subunits are generated from the proenzyme in this reaction, and the pyruvate is formed at the N-terminus of the alpha chain, which is derived from the carboxyl end of the proenzyme. The post-translation cleavage follows an unusual pathway, termed non-hydrolytic serinolysis, in which the side chain hydroxyl group of the serine supplies its oxygen atom to form the C-terminus of the beta chain, while the remainder of the serine residue undergoes an oxidative deamination to produce ammonia and the pyruvoyl group blocking the N-terminus of the alpha chain.</text>
</comment>
<comment type="similarity">
    <text evidence="1">Belongs to the prokaryotic AdoMetDC family. Type 2 subfamily.</text>
</comment>
<protein>
    <recommendedName>
        <fullName evidence="1">S-adenosylmethionine decarboxylase proenzyme</fullName>
        <shortName evidence="1">AdoMetDC</shortName>
        <shortName evidence="1">SAMDC</shortName>
        <ecNumber evidence="1">4.1.1.50</ecNumber>
    </recommendedName>
    <component>
        <recommendedName>
            <fullName evidence="1">S-adenosylmethionine decarboxylase beta chain</fullName>
        </recommendedName>
    </component>
    <component>
        <recommendedName>
            <fullName evidence="1">S-adenosylmethionine decarboxylase alpha chain</fullName>
        </recommendedName>
    </component>
</protein>
<organism>
    <name type="scientific">Xanthomonas oryzae pv. oryzae (strain MAFF 311018)</name>
    <dbReference type="NCBI Taxonomy" id="342109"/>
    <lineage>
        <taxon>Bacteria</taxon>
        <taxon>Pseudomonadati</taxon>
        <taxon>Pseudomonadota</taxon>
        <taxon>Gammaproteobacteria</taxon>
        <taxon>Lysobacterales</taxon>
        <taxon>Lysobacteraceae</taxon>
        <taxon>Xanthomonas</taxon>
    </lineage>
</organism>
<keyword id="KW-0068">Autocatalytic cleavage</keyword>
<keyword id="KW-0210">Decarboxylase</keyword>
<keyword id="KW-0456">Lyase</keyword>
<keyword id="KW-0620">Polyamine biosynthesis</keyword>
<keyword id="KW-0670">Pyruvate</keyword>
<keyword id="KW-0949">S-adenosyl-L-methionine</keyword>
<keyword id="KW-0704">Schiff base</keyword>
<keyword id="KW-0745">Spermidine biosynthesis</keyword>
<keyword id="KW-0865">Zymogen</keyword>